<organism>
    <name type="scientific">Pseudomonas putida (strain ATCC 700007 / DSM 6899 / JCM 31910 / BCRC 17059 / LMG 24140 / F1)</name>
    <dbReference type="NCBI Taxonomy" id="351746"/>
    <lineage>
        <taxon>Bacteria</taxon>
        <taxon>Pseudomonadati</taxon>
        <taxon>Pseudomonadota</taxon>
        <taxon>Gammaproteobacteria</taxon>
        <taxon>Pseudomonadales</taxon>
        <taxon>Pseudomonadaceae</taxon>
        <taxon>Pseudomonas</taxon>
    </lineage>
</organism>
<accession>A5VYH8</accession>
<protein>
    <recommendedName>
        <fullName evidence="1">Uracil phosphoribosyltransferase</fullName>
        <ecNumber evidence="1">2.4.2.9</ecNumber>
    </recommendedName>
    <alternativeName>
        <fullName evidence="1">UMP pyrophosphorylase</fullName>
    </alternativeName>
    <alternativeName>
        <fullName evidence="1">UPRTase</fullName>
    </alternativeName>
</protein>
<evidence type="ECO:0000255" key="1">
    <source>
        <dbReference type="HAMAP-Rule" id="MF_01218"/>
    </source>
</evidence>
<feature type="chain" id="PRO_1000053765" description="Uracil phosphoribosyltransferase">
    <location>
        <begin position="1"/>
        <end position="212"/>
    </location>
</feature>
<feature type="binding site" evidence="1">
    <location>
        <position position="78"/>
    </location>
    <ligand>
        <name>5-phospho-alpha-D-ribose 1-diphosphate</name>
        <dbReference type="ChEBI" id="CHEBI:58017"/>
    </ligand>
</feature>
<feature type="binding site" evidence="1">
    <location>
        <position position="103"/>
    </location>
    <ligand>
        <name>5-phospho-alpha-D-ribose 1-diphosphate</name>
        <dbReference type="ChEBI" id="CHEBI:58017"/>
    </ligand>
</feature>
<feature type="binding site" evidence="1">
    <location>
        <begin position="130"/>
        <end position="138"/>
    </location>
    <ligand>
        <name>5-phospho-alpha-D-ribose 1-diphosphate</name>
        <dbReference type="ChEBI" id="CHEBI:58017"/>
    </ligand>
</feature>
<feature type="binding site" evidence="1">
    <location>
        <position position="193"/>
    </location>
    <ligand>
        <name>uracil</name>
        <dbReference type="ChEBI" id="CHEBI:17568"/>
    </ligand>
</feature>
<feature type="binding site" evidence="1">
    <location>
        <begin position="198"/>
        <end position="200"/>
    </location>
    <ligand>
        <name>uracil</name>
        <dbReference type="ChEBI" id="CHEBI:17568"/>
    </ligand>
</feature>
<feature type="binding site" evidence="1">
    <location>
        <position position="199"/>
    </location>
    <ligand>
        <name>5-phospho-alpha-D-ribose 1-diphosphate</name>
        <dbReference type="ChEBI" id="CHEBI:58017"/>
    </ligand>
</feature>
<gene>
    <name evidence="1" type="primary">upp</name>
    <name type="ordered locus">Pput_0774</name>
</gene>
<sequence length="212" mass="23000">MPTREIRHPLIRHKLGLMRRADISTKNFRELAQEVGALLTYEATQDLPLETYEIDGWCGKVSVEKIAGKKITVVPILRAGIGMLDGVLSLIPGAKVSAVGVARNEETLEAHTYLEKLAPDINQRLALIIDPMLATGGSMVATIDLLKKAGCKEIRAMVLVAAPEGIEVVEKAHPDVKIYTASIDQRLNEHGYIVPGLGDAGDKIFGTKQKDA</sequence>
<name>UPP_PSEP1</name>
<proteinExistence type="inferred from homology"/>
<dbReference type="EC" id="2.4.2.9" evidence="1"/>
<dbReference type="EMBL" id="CP000712">
    <property type="protein sequence ID" value="ABQ76938.1"/>
    <property type="molecule type" value="Genomic_DNA"/>
</dbReference>
<dbReference type="SMR" id="A5VYH8"/>
<dbReference type="KEGG" id="ppf:Pput_0774"/>
<dbReference type="eggNOG" id="COG0035">
    <property type="taxonomic scope" value="Bacteria"/>
</dbReference>
<dbReference type="HOGENOM" id="CLU_067096_2_2_6"/>
<dbReference type="UniPathway" id="UPA00574">
    <property type="reaction ID" value="UER00636"/>
</dbReference>
<dbReference type="GO" id="GO:0005525">
    <property type="term" value="F:GTP binding"/>
    <property type="evidence" value="ECO:0007669"/>
    <property type="project" value="UniProtKB-KW"/>
</dbReference>
<dbReference type="GO" id="GO:0000287">
    <property type="term" value="F:magnesium ion binding"/>
    <property type="evidence" value="ECO:0007669"/>
    <property type="project" value="UniProtKB-UniRule"/>
</dbReference>
<dbReference type="GO" id="GO:0004845">
    <property type="term" value="F:uracil phosphoribosyltransferase activity"/>
    <property type="evidence" value="ECO:0007669"/>
    <property type="project" value="UniProtKB-UniRule"/>
</dbReference>
<dbReference type="GO" id="GO:0044206">
    <property type="term" value="P:UMP salvage"/>
    <property type="evidence" value="ECO:0007669"/>
    <property type="project" value="UniProtKB-UniRule"/>
</dbReference>
<dbReference type="GO" id="GO:0006223">
    <property type="term" value="P:uracil salvage"/>
    <property type="evidence" value="ECO:0007669"/>
    <property type="project" value="InterPro"/>
</dbReference>
<dbReference type="CDD" id="cd06223">
    <property type="entry name" value="PRTases_typeI"/>
    <property type="match status" value="1"/>
</dbReference>
<dbReference type="FunFam" id="3.40.50.2020:FF:000003">
    <property type="entry name" value="Uracil phosphoribosyltransferase"/>
    <property type="match status" value="1"/>
</dbReference>
<dbReference type="Gene3D" id="3.40.50.2020">
    <property type="match status" value="1"/>
</dbReference>
<dbReference type="HAMAP" id="MF_01218_B">
    <property type="entry name" value="Upp_B"/>
    <property type="match status" value="1"/>
</dbReference>
<dbReference type="InterPro" id="IPR000836">
    <property type="entry name" value="PRibTrfase_dom"/>
</dbReference>
<dbReference type="InterPro" id="IPR029057">
    <property type="entry name" value="PRTase-like"/>
</dbReference>
<dbReference type="InterPro" id="IPR034332">
    <property type="entry name" value="Upp_B"/>
</dbReference>
<dbReference type="InterPro" id="IPR050054">
    <property type="entry name" value="UPRTase/APRTase"/>
</dbReference>
<dbReference type="InterPro" id="IPR005765">
    <property type="entry name" value="Ura_phspho_trans"/>
</dbReference>
<dbReference type="NCBIfam" id="NF001097">
    <property type="entry name" value="PRK00129.1"/>
    <property type="match status" value="1"/>
</dbReference>
<dbReference type="NCBIfam" id="TIGR01091">
    <property type="entry name" value="upp"/>
    <property type="match status" value="1"/>
</dbReference>
<dbReference type="PANTHER" id="PTHR32315">
    <property type="entry name" value="ADENINE PHOSPHORIBOSYLTRANSFERASE"/>
    <property type="match status" value="1"/>
</dbReference>
<dbReference type="PANTHER" id="PTHR32315:SF4">
    <property type="entry name" value="URACIL PHOSPHORIBOSYLTRANSFERASE, CHLOROPLASTIC"/>
    <property type="match status" value="1"/>
</dbReference>
<dbReference type="Pfam" id="PF14681">
    <property type="entry name" value="UPRTase"/>
    <property type="match status" value="1"/>
</dbReference>
<dbReference type="SUPFAM" id="SSF53271">
    <property type="entry name" value="PRTase-like"/>
    <property type="match status" value="1"/>
</dbReference>
<keyword id="KW-0021">Allosteric enzyme</keyword>
<keyword id="KW-0328">Glycosyltransferase</keyword>
<keyword id="KW-0342">GTP-binding</keyword>
<keyword id="KW-0460">Magnesium</keyword>
<keyword id="KW-0547">Nucleotide-binding</keyword>
<keyword id="KW-0808">Transferase</keyword>
<comment type="function">
    <text evidence="1">Catalyzes the conversion of uracil and 5-phospho-alpha-D-ribose 1-diphosphate (PRPP) to UMP and diphosphate.</text>
</comment>
<comment type="catalytic activity">
    <reaction evidence="1">
        <text>UMP + diphosphate = 5-phospho-alpha-D-ribose 1-diphosphate + uracil</text>
        <dbReference type="Rhea" id="RHEA:13017"/>
        <dbReference type="ChEBI" id="CHEBI:17568"/>
        <dbReference type="ChEBI" id="CHEBI:33019"/>
        <dbReference type="ChEBI" id="CHEBI:57865"/>
        <dbReference type="ChEBI" id="CHEBI:58017"/>
        <dbReference type="EC" id="2.4.2.9"/>
    </reaction>
</comment>
<comment type="cofactor">
    <cofactor evidence="1">
        <name>Mg(2+)</name>
        <dbReference type="ChEBI" id="CHEBI:18420"/>
    </cofactor>
    <text evidence="1">Binds 1 Mg(2+) ion per subunit. The magnesium is bound as Mg-PRPP.</text>
</comment>
<comment type="activity regulation">
    <text evidence="1">Allosterically activated by GTP.</text>
</comment>
<comment type="pathway">
    <text evidence="1">Pyrimidine metabolism; UMP biosynthesis via salvage pathway; UMP from uracil: step 1/1.</text>
</comment>
<comment type="similarity">
    <text evidence="1">Belongs to the UPRTase family.</text>
</comment>
<reference key="1">
    <citation type="submission" date="2007-05" db="EMBL/GenBank/DDBJ databases">
        <title>Complete sequence of Pseudomonas putida F1.</title>
        <authorList>
            <consortium name="US DOE Joint Genome Institute"/>
            <person name="Copeland A."/>
            <person name="Lucas S."/>
            <person name="Lapidus A."/>
            <person name="Barry K."/>
            <person name="Detter J.C."/>
            <person name="Glavina del Rio T."/>
            <person name="Hammon N."/>
            <person name="Israni S."/>
            <person name="Dalin E."/>
            <person name="Tice H."/>
            <person name="Pitluck S."/>
            <person name="Chain P."/>
            <person name="Malfatti S."/>
            <person name="Shin M."/>
            <person name="Vergez L."/>
            <person name="Schmutz J."/>
            <person name="Larimer F."/>
            <person name="Land M."/>
            <person name="Hauser L."/>
            <person name="Kyrpides N."/>
            <person name="Lykidis A."/>
            <person name="Parales R."/>
            <person name="Richardson P."/>
        </authorList>
    </citation>
    <scope>NUCLEOTIDE SEQUENCE [LARGE SCALE GENOMIC DNA]</scope>
    <source>
        <strain>ATCC 700007 / DSM 6899 / JCM 31910 / BCRC 17059 / LMG 24140 / F1</strain>
    </source>
</reference>